<protein>
    <recommendedName>
        <fullName>Cytochrome b</fullName>
    </recommendedName>
    <alternativeName>
        <fullName>Complex III subunit 3</fullName>
    </alternativeName>
    <alternativeName>
        <fullName>Complex III subunit III</fullName>
    </alternativeName>
    <alternativeName>
        <fullName>Cytochrome b-c1 complex subunit 3</fullName>
    </alternativeName>
    <alternativeName>
        <fullName>Ubiquinol-cytochrome-c reductase complex cytochrome b subunit</fullName>
    </alternativeName>
</protein>
<name>CYB_TRAOR</name>
<feature type="chain" id="PRO_0000061679" description="Cytochrome b">
    <location>
        <begin position="1"/>
        <end position="379"/>
    </location>
</feature>
<feature type="transmembrane region" description="Helical" evidence="2">
    <location>
        <begin position="33"/>
        <end position="53"/>
    </location>
</feature>
<feature type="transmembrane region" description="Helical" evidence="2">
    <location>
        <begin position="77"/>
        <end position="98"/>
    </location>
</feature>
<feature type="transmembrane region" description="Helical" evidence="2">
    <location>
        <begin position="113"/>
        <end position="133"/>
    </location>
</feature>
<feature type="transmembrane region" description="Helical" evidence="2">
    <location>
        <begin position="178"/>
        <end position="198"/>
    </location>
</feature>
<feature type="transmembrane region" description="Helical" evidence="2">
    <location>
        <begin position="226"/>
        <end position="246"/>
    </location>
</feature>
<feature type="transmembrane region" description="Helical" evidence="2">
    <location>
        <begin position="288"/>
        <end position="308"/>
    </location>
</feature>
<feature type="transmembrane region" description="Helical" evidence="2">
    <location>
        <begin position="320"/>
        <end position="340"/>
    </location>
</feature>
<feature type="transmembrane region" description="Helical" evidence="2">
    <location>
        <begin position="347"/>
        <end position="367"/>
    </location>
</feature>
<feature type="binding site" description="axial binding residue" evidence="2">
    <location>
        <position position="83"/>
    </location>
    <ligand>
        <name>heme b</name>
        <dbReference type="ChEBI" id="CHEBI:60344"/>
        <label>b562</label>
    </ligand>
    <ligandPart>
        <name>Fe</name>
        <dbReference type="ChEBI" id="CHEBI:18248"/>
    </ligandPart>
</feature>
<feature type="binding site" description="axial binding residue" evidence="2">
    <location>
        <position position="97"/>
    </location>
    <ligand>
        <name>heme b</name>
        <dbReference type="ChEBI" id="CHEBI:60344"/>
        <label>b566</label>
    </ligand>
    <ligandPart>
        <name>Fe</name>
        <dbReference type="ChEBI" id="CHEBI:18248"/>
    </ligandPart>
</feature>
<feature type="binding site" description="axial binding residue" evidence="2">
    <location>
        <position position="182"/>
    </location>
    <ligand>
        <name>heme b</name>
        <dbReference type="ChEBI" id="CHEBI:60344"/>
        <label>b562</label>
    </ligand>
    <ligandPart>
        <name>Fe</name>
        <dbReference type="ChEBI" id="CHEBI:18248"/>
    </ligandPart>
</feature>
<feature type="binding site" description="axial binding residue" evidence="2">
    <location>
        <position position="196"/>
    </location>
    <ligand>
        <name>heme b</name>
        <dbReference type="ChEBI" id="CHEBI:60344"/>
        <label>b566</label>
    </ligand>
    <ligandPart>
        <name>Fe</name>
        <dbReference type="ChEBI" id="CHEBI:18248"/>
    </ligandPart>
</feature>
<feature type="binding site" evidence="2">
    <location>
        <position position="201"/>
    </location>
    <ligand>
        <name>a ubiquinone</name>
        <dbReference type="ChEBI" id="CHEBI:16389"/>
    </ligand>
</feature>
<evidence type="ECO:0000250" key="1"/>
<evidence type="ECO:0000250" key="2">
    <source>
        <dbReference type="UniProtKB" id="P00157"/>
    </source>
</evidence>
<evidence type="ECO:0000255" key="3">
    <source>
        <dbReference type="PROSITE-ProRule" id="PRU00967"/>
    </source>
</evidence>
<evidence type="ECO:0000255" key="4">
    <source>
        <dbReference type="PROSITE-ProRule" id="PRU00968"/>
    </source>
</evidence>
<sequence>MTNIRKSHPLMKIVNNAFIDLPTPSNISSWWNFGSLLGICLILXILTGLFLAMHYTSDTTTAFSSVTHICXDVNYGWIIRYMHANGASMFFICLYMHVGRGMYYGSYTFLETWNIGVILLFTVMAAAFMGYVLPWGQMSFWGATVITNLLSAIPYIGTSLVEWIWGGFSVDKATLTRFFAFHFILPFIIAALAMVHLLFLHETGSNNPTGISSDTDKIPFHPYHTIKDILGALLLILTLMLLVLFAPDLLGDPDNYTPANPLNTPPHIKPEWYFLFAYAILRSIPNKLGGVLALVLSILILILMPLLHTSKQRSMMFRPLSQCLFWVLAADLLTXTWIGGQPVEHPYIIIGQLASIMYFLLILVLMPVTSMIENNFLKW</sequence>
<keyword id="KW-0249">Electron transport</keyword>
<keyword id="KW-0349">Heme</keyword>
<keyword id="KW-0408">Iron</keyword>
<keyword id="KW-0472">Membrane</keyword>
<keyword id="KW-0479">Metal-binding</keyword>
<keyword id="KW-0496">Mitochondrion</keyword>
<keyword id="KW-0999">Mitochondrion inner membrane</keyword>
<keyword id="KW-0679">Respiratory chain</keyword>
<keyword id="KW-0812">Transmembrane</keyword>
<keyword id="KW-1133">Transmembrane helix</keyword>
<keyword id="KW-0813">Transport</keyword>
<keyword id="KW-0830">Ubiquinone</keyword>
<comment type="function">
    <text evidence="2">Component of the ubiquinol-cytochrome c reductase complex (complex III or cytochrome b-c1 complex) that is part of the mitochondrial respiratory chain. The b-c1 complex mediates electron transfer from ubiquinol to cytochrome c. Contributes to the generation of a proton gradient across the mitochondrial membrane that is then used for ATP synthesis.</text>
</comment>
<comment type="cofactor">
    <cofactor evidence="2">
        <name>heme b</name>
        <dbReference type="ChEBI" id="CHEBI:60344"/>
    </cofactor>
    <text evidence="2">Binds 2 heme b groups non-covalently.</text>
</comment>
<comment type="subunit">
    <text evidence="2">The cytochrome bc1 complex contains 11 subunits: 3 respiratory subunits (MT-CYB, CYC1 and UQCRFS1), 2 core proteins (UQCRC1 and UQCRC2) and 6 low-molecular weight proteins (UQCRH/QCR6, UQCRB/QCR7, UQCRQ/QCR8, UQCR10/QCR9, UQCR11/QCR10 and a cleavage product of UQCRFS1). This cytochrome bc1 complex then forms a dimer.</text>
</comment>
<comment type="subcellular location">
    <subcellularLocation>
        <location evidence="2">Mitochondrion inner membrane</location>
        <topology evidence="2">Multi-pass membrane protein</topology>
    </subcellularLocation>
</comment>
<comment type="miscellaneous">
    <text evidence="1">Heme 1 (or BL or b562) is low-potential and absorbs at about 562 nm, and heme 2 (or BH or b566) is high-potential and absorbs at about 566 nm.</text>
</comment>
<comment type="similarity">
    <text evidence="3 4">Belongs to the cytochrome b family.</text>
</comment>
<comment type="caution">
    <text evidence="2">The full-length protein contains only eight transmembrane helices, not nine as predicted by bioinformatics tools.</text>
</comment>
<dbReference type="EMBL" id="AF036278">
    <property type="protein sequence ID" value="AAD51429.1"/>
    <property type="molecule type" value="Genomic_DNA"/>
</dbReference>
<dbReference type="GO" id="GO:0005743">
    <property type="term" value="C:mitochondrial inner membrane"/>
    <property type="evidence" value="ECO:0007669"/>
    <property type="project" value="UniProtKB-SubCell"/>
</dbReference>
<dbReference type="GO" id="GO:0045275">
    <property type="term" value="C:respiratory chain complex III"/>
    <property type="evidence" value="ECO:0007669"/>
    <property type="project" value="InterPro"/>
</dbReference>
<dbReference type="GO" id="GO:0046872">
    <property type="term" value="F:metal ion binding"/>
    <property type="evidence" value="ECO:0007669"/>
    <property type="project" value="UniProtKB-KW"/>
</dbReference>
<dbReference type="GO" id="GO:0008121">
    <property type="term" value="F:ubiquinol-cytochrome-c reductase activity"/>
    <property type="evidence" value="ECO:0007669"/>
    <property type="project" value="InterPro"/>
</dbReference>
<dbReference type="GO" id="GO:0006122">
    <property type="term" value="P:mitochondrial electron transport, ubiquinol to cytochrome c"/>
    <property type="evidence" value="ECO:0007669"/>
    <property type="project" value="TreeGrafter"/>
</dbReference>
<dbReference type="CDD" id="cd00290">
    <property type="entry name" value="cytochrome_b_C"/>
    <property type="match status" value="1"/>
</dbReference>
<dbReference type="CDD" id="cd00284">
    <property type="entry name" value="Cytochrome_b_N"/>
    <property type="match status" value="1"/>
</dbReference>
<dbReference type="FunFam" id="1.20.810.10:FF:000002">
    <property type="entry name" value="Cytochrome b"/>
    <property type="match status" value="1"/>
</dbReference>
<dbReference type="Gene3D" id="1.20.810.10">
    <property type="entry name" value="Cytochrome Bc1 Complex, Chain C"/>
    <property type="match status" value="1"/>
</dbReference>
<dbReference type="InterPro" id="IPR005798">
    <property type="entry name" value="Cyt_b/b6_C"/>
</dbReference>
<dbReference type="InterPro" id="IPR036150">
    <property type="entry name" value="Cyt_b/b6_C_sf"/>
</dbReference>
<dbReference type="InterPro" id="IPR005797">
    <property type="entry name" value="Cyt_b/b6_N"/>
</dbReference>
<dbReference type="InterPro" id="IPR027387">
    <property type="entry name" value="Cytb/b6-like_sf"/>
</dbReference>
<dbReference type="InterPro" id="IPR030689">
    <property type="entry name" value="Cytochrome_b"/>
</dbReference>
<dbReference type="InterPro" id="IPR048260">
    <property type="entry name" value="Cytochrome_b_C_euk/bac"/>
</dbReference>
<dbReference type="InterPro" id="IPR048259">
    <property type="entry name" value="Cytochrome_b_N_euk/bac"/>
</dbReference>
<dbReference type="InterPro" id="IPR016174">
    <property type="entry name" value="Di-haem_cyt_TM"/>
</dbReference>
<dbReference type="PANTHER" id="PTHR19271">
    <property type="entry name" value="CYTOCHROME B"/>
    <property type="match status" value="1"/>
</dbReference>
<dbReference type="PANTHER" id="PTHR19271:SF16">
    <property type="entry name" value="CYTOCHROME B"/>
    <property type="match status" value="1"/>
</dbReference>
<dbReference type="Pfam" id="PF00032">
    <property type="entry name" value="Cytochrom_B_C"/>
    <property type="match status" value="1"/>
</dbReference>
<dbReference type="Pfam" id="PF00033">
    <property type="entry name" value="Cytochrome_B"/>
    <property type="match status" value="1"/>
</dbReference>
<dbReference type="PIRSF" id="PIRSF038885">
    <property type="entry name" value="COB"/>
    <property type="match status" value="1"/>
</dbReference>
<dbReference type="SUPFAM" id="SSF81648">
    <property type="entry name" value="a domain/subunit of cytochrome bc1 complex (Ubiquinol-cytochrome c reductase)"/>
    <property type="match status" value="1"/>
</dbReference>
<dbReference type="SUPFAM" id="SSF81342">
    <property type="entry name" value="Transmembrane di-heme cytochromes"/>
    <property type="match status" value="1"/>
</dbReference>
<dbReference type="PROSITE" id="PS51003">
    <property type="entry name" value="CYTB_CTER"/>
    <property type="match status" value="1"/>
</dbReference>
<dbReference type="PROSITE" id="PS51002">
    <property type="entry name" value="CYTB_NTER"/>
    <property type="match status" value="1"/>
</dbReference>
<reference key="1">
    <citation type="journal article" date="1999" name="Mol. Phylogenet. Evol.">
        <title>The tribal radiation of the family Bovidae (Artiodactyla) and the evolution of the mitochondrial cytochrome b gene.</title>
        <authorList>
            <person name="Hassanin A."/>
            <person name="Douzery E.J.P."/>
        </authorList>
    </citation>
    <scope>NUCLEOTIDE SEQUENCE [GENOMIC DNA]</scope>
</reference>
<organism>
    <name type="scientific">Tragelaphus oryx</name>
    <name type="common">Eland</name>
    <name type="synonym">Taurotragus oryx</name>
    <dbReference type="NCBI Taxonomy" id="9945"/>
    <lineage>
        <taxon>Eukaryota</taxon>
        <taxon>Metazoa</taxon>
        <taxon>Chordata</taxon>
        <taxon>Craniata</taxon>
        <taxon>Vertebrata</taxon>
        <taxon>Euteleostomi</taxon>
        <taxon>Mammalia</taxon>
        <taxon>Eutheria</taxon>
        <taxon>Laurasiatheria</taxon>
        <taxon>Artiodactyla</taxon>
        <taxon>Ruminantia</taxon>
        <taxon>Pecora</taxon>
        <taxon>Bovidae</taxon>
        <taxon>Bovinae</taxon>
        <taxon>Tragelaphus</taxon>
    </lineage>
</organism>
<accession>Q9T9B6</accession>
<proteinExistence type="inferred from homology"/>
<geneLocation type="mitochondrion"/>
<gene>
    <name type="primary">MT-CYB</name>
    <name type="synonym">COB</name>
    <name type="synonym">CYTB</name>
    <name type="synonym">MTCYB</name>
</gene>